<dbReference type="EC" id="5.2.1.8"/>
<dbReference type="EMBL" id="AL111168">
    <property type="protein sequence ID" value="CAL34742.1"/>
    <property type="molecule type" value="Genomic_DNA"/>
</dbReference>
<dbReference type="PIR" id="S52412">
    <property type="entry name" value="S52412"/>
</dbReference>
<dbReference type="PDB" id="3RFW">
    <property type="method" value="X-ray"/>
    <property type="resolution" value="2.20 A"/>
    <property type="chains" value="A=22-273"/>
</dbReference>
<dbReference type="PDBsum" id="3RFW"/>
<dbReference type="SMR" id="Q0PAS1"/>
<dbReference type="IntAct" id="Q0PAS1">
    <property type="interactions" value="60"/>
</dbReference>
<dbReference type="STRING" id="192222.Cj0596"/>
<dbReference type="PaxDb" id="192222-Cj0596"/>
<dbReference type="DNASU" id="904921"/>
<dbReference type="EnsemblBacteria" id="CAL34742">
    <property type="protein sequence ID" value="CAL34742"/>
    <property type="gene ID" value="Cj0596"/>
</dbReference>
<dbReference type="KEGG" id="cje:Cj0596"/>
<dbReference type="PATRIC" id="fig|192222.6.peg.588"/>
<dbReference type="eggNOG" id="COG0760">
    <property type="taxonomic scope" value="Bacteria"/>
</dbReference>
<dbReference type="HOGENOM" id="CLU_034646_1_2_7"/>
<dbReference type="OrthoDB" id="14196at2"/>
<dbReference type="EvolutionaryTrace" id="Q0PAS1"/>
<dbReference type="Proteomes" id="UP000000799">
    <property type="component" value="Chromosome"/>
</dbReference>
<dbReference type="GO" id="GO:0003755">
    <property type="term" value="F:peptidyl-prolyl cis-trans isomerase activity"/>
    <property type="evidence" value="ECO:0007669"/>
    <property type="project" value="UniProtKB-KW"/>
</dbReference>
<dbReference type="Gene3D" id="1.10.8.1040">
    <property type="match status" value="1"/>
</dbReference>
<dbReference type="Gene3D" id="3.10.50.40">
    <property type="match status" value="1"/>
</dbReference>
<dbReference type="Gene3D" id="6.10.140.970">
    <property type="match status" value="1"/>
</dbReference>
<dbReference type="InterPro" id="IPR046357">
    <property type="entry name" value="PPIase_dom_sf"/>
</dbReference>
<dbReference type="InterPro" id="IPR000297">
    <property type="entry name" value="PPIase_PpiC"/>
</dbReference>
<dbReference type="InterPro" id="IPR023058">
    <property type="entry name" value="PPIase_PpiC_CS"/>
</dbReference>
<dbReference type="InterPro" id="IPR050245">
    <property type="entry name" value="PrsA_foldase"/>
</dbReference>
<dbReference type="PANTHER" id="PTHR47245:SF1">
    <property type="entry name" value="FOLDASE PROTEIN PRSA"/>
    <property type="match status" value="1"/>
</dbReference>
<dbReference type="PANTHER" id="PTHR47245">
    <property type="entry name" value="PEPTIDYLPROLYL ISOMERASE"/>
    <property type="match status" value="1"/>
</dbReference>
<dbReference type="Pfam" id="PF13616">
    <property type="entry name" value="Rotamase_3"/>
    <property type="match status" value="1"/>
</dbReference>
<dbReference type="SUPFAM" id="SSF54534">
    <property type="entry name" value="FKBP-like"/>
    <property type="match status" value="1"/>
</dbReference>
<dbReference type="PROSITE" id="PS01096">
    <property type="entry name" value="PPIC_PPIASE_1"/>
    <property type="match status" value="1"/>
</dbReference>
<dbReference type="PROSITE" id="PS50198">
    <property type="entry name" value="PPIC_PPIASE_2"/>
    <property type="match status" value="1"/>
</dbReference>
<sequence>MKKFSLVAATLIAGVVLNVNAATVATVNGKSISDTEVSEFFAPMLRGQDFKTLPDNQKKALIQQYIMQDLILQDAKKQNLEKDPLYTKELDRAKDAILVNVYQEKILNTIKIDAAKVKAFYDQNKDKYVKPARVQAKHILVATEKEAKDIINELKGLKGKELDAKFSELAKEKSIDPGSKNQGGELGWFDQSTMVKPFTDAAFALKNGTITTTPVKTNFGYHVILKENSQAKGQIKFDEVKQGIENGLKFEEFKKVINQKGQDLLNSAKVEYK</sequence>
<organism>
    <name type="scientific">Campylobacter jejuni subsp. jejuni serotype O:2 (strain ATCC 700819 / NCTC 11168)</name>
    <dbReference type="NCBI Taxonomy" id="192222"/>
    <lineage>
        <taxon>Bacteria</taxon>
        <taxon>Pseudomonadati</taxon>
        <taxon>Campylobacterota</taxon>
        <taxon>Epsilonproteobacteria</taxon>
        <taxon>Campylobacterales</taxon>
        <taxon>Campylobacteraceae</taxon>
        <taxon>Campylobacter</taxon>
    </lineage>
</organism>
<protein>
    <recommendedName>
        <fullName>Putative peptidyl-prolyl cis-trans isomerase Cbf2</fullName>
        <shortName>PPIase Cbf2</shortName>
        <ecNumber>5.2.1.8</ecNumber>
    </recommendedName>
    <alternativeName>
        <fullName>Cell-binding factor 2</fullName>
    </alternativeName>
    <alternativeName>
        <fullName>Major antigen peb4A</fullName>
    </alternativeName>
    <alternativeName>
        <fullName>Rotamase Cbf2</fullName>
    </alternativeName>
</protein>
<comment type="catalytic activity">
    <reaction>
        <text>[protein]-peptidylproline (omega=180) = [protein]-peptidylproline (omega=0)</text>
        <dbReference type="Rhea" id="RHEA:16237"/>
        <dbReference type="Rhea" id="RHEA-COMP:10747"/>
        <dbReference type="Rhea" id="RHEA-COMP:10748"/>
        <dbReference type="ChEBI" id="CHEBI:83833"/>
        <dbReference type="ChEBI" id="CHEBI:83834"/>
        <dbReference type="EC" id="5.2.1.8"/>
    </reaction>
</comment>
<accession>Q0PAS1</accession>
<accession>Q46105</accession>
<proteinExistence type="evidence at protein level"/>
<keyword id="KW-0002">3D-structure</keyword>
<keyword id="KW-0413">Isomerase</keyword>
<keyword id="KW-1185">Reference proteome</keyword>
<keyword id="KW-0697">Rotamase</keyword>
<keyword id="KW-0732">Signal</keyword>
<name>CBF2_CAMJE</name>
<gene>
    <name type="primary">cbf2</name>
    <name type="synonym">peb4A</name>
    <name type="ordered locus">Cj0596</name>
</gene>
<reference key="1">
    <citation type="journal article" date="2000" name="Nature">
        <title>The genome sequence of the food-borne pathogen Campylobacter jejuni reveals hypervariable sequences.</title>
        <authorList>
            <person name="Parkhill J."/>
            <person name="Wren B.W."/>
            <person name="Mungall K.L."/>
            <person name="Ketley J.M."/>
            <person name="Churcher C.M."/>
            <person name="Basham D."/>
            <person name="Chillingworth T."/>
            <person name="Davies R.M."/>
            <person name="Feltwell T."/>
            <person name="Holroyd S."/>
            <person name="Jagels K."/>
            <person name="Karlyshev A.V."/>
            <person name="Moule S."/>
            <person name="Pallen M.J."/>
            <person name="Penn C.W."/>
            <person name="Quail M.A."/>
            <person name="Rajandream M.A."/>
            <person name="Rutherford K.M."/>
            <person name="van Vliet A.H.M."/>
            <person name="Whitehead S."/>
            <person name="Barrell B.G."/>
        </authorList>
    </citation>
    <scope>NUCLEOTIDE SEQUENCE [LARGE SCALE GENOMIC DNA]</scope>
    <source>
        <strain>ATCC 700819 / NCTC 11168</strain>
    </source>
</reference>
<feature type="signal peptide" evidence="1">
    <location>
        <begin position="1"/>
        <end position="21"/>
    </location>
</feature>
<feature type="chain" id="PRO_0000025546" description="Putative peptidyl-prolyl cis-trans isomerase Cbf2">
    <location>
        <begin position="22"/>
        <end position="273"/>
    </location>
</feature>
<feature type="domain" description="PpiC" evidence="2">
    <location>
        <begin position="131"/>
        <end position="228"/>
    </location>
</feature>
<feature type="strand" evidence="3">
    <location>
        <begin position="23"/>
        <end position="27"/>
    </location>
</feature>
<feature type="strand" evidence="3">
    <location>
        <begin position="30"/>
        <end position="33"/>
    </location>
</feature>
<feature type="helix" evidence="3">
    <location>
        <begin position="34"/>
        <end position="45"/>
    </location>
</feature>
<feature type="helix" evidence="3">
    <location>
        <begin position="50"/>
        <end position="52"/>
    </location>
</feature>
<feature type="helix" evidence="3">
    <location>
        <begin position="55"/>
        <end position="77"/>
    </location>
</feature>
<feature type="helix" evidence="3">
    <location>
        <begin position="80"/>
        <end position="82"/>
    </location>
</feature>
<feature type="helix" evidence="3">
    <location>
        <begin position="84"/>
        <end position="107"/>
    </location>
</feature>
<feature type="helix" evidence="3">
    <location>
        <begin position="114"/>
        <end position="124"/>
    </location>
</feature>
<feature type="helix" evidence="3">
    <location>
        <begin position="125"/>
        <end position="127"/>
    </location>
</feature>
<feature type="strand" evidence="3">
    <location>
        <begin position="128"/>
        <end position="130"/>
    </location>
</feature>
<feature type="strand" evidence="3">
    <location>
        <begin position="133"/>
        <end position="143"/>
    </location>
</feature>
<feature type="helix" evidence="3">
    <location>
        <begin position="144"/>
        <end position="154"/>
    </location>
</feature>
<feature type="helix" evidence="3">
    <location>
        <begin position="159"/>
        <end position="173"/>
    </location>
</feature>
<feature type="turn" evidence="3">
    <location>
        <begin position="177"/>
        <end position="179"/>
    </location>
</feature>
<feature type="helix" evidence="3">
    <location>
        <begin position="180"/>
        <end position="182"/>
    </location>
</feature>
<feature type="strand" evidence="3">
    <location>
        <begin position="185"/>
        <end position="189"/>
    </location>
</feature>
<feature type="strand" evidence="3">
    <location>
        <begin position="191"/>
        <end position="194"/>
    </location>
</feature>
<feature type="helix" evidence="3">
    <location>
        <begin position="196"/>
        <end position="204"/>
    </location>
</feature>
<feature type="strand" evidence="3">
    <location>
        <begin position="215"/>
        <end position="217"/>
    </location>
</feature>
<feature type="strand" evidence="3">
    <location>
        <begin position="220"/>
        <end position="230"/>
    </location>
</feature>
<feature type="helix" evidence="3">
    <location>
        <begin position="237"/>
        <end position="267"/>
    </location>
</feature>
<evidence type="ECO:0000255" key="1"/>
<evidence type="ECO:0000255" key="2">
    <source>
        <dbReference type="PROSITE-ProRule" id="PRU00278"/>
    </source>
</evidence>
<evidence type="ECO:0007829" key="3">
    <source>
        <dbReference type="PDB" id="3RFW"/>
    </source>
</evidence>